<keyword id="KW-0032">Aminotransferase</keyword>
<keyword id="KW-0663">Pyridoxal phosphate</keyword>
<keyword id="KW-1185">Reference proteome</keyword>
<keyword id="KW-0808">Transferase</keyword>
<gene>
    <name evidence="1" type="primary">patA</name>
    <name type="ordered locus">ECS88_3470</name>
</gene>
<feature type="chain" id="PRO_0000379546" description="Putrescine aminotransferase">
    <location>
        <begin position="1"/>
        <end position="459"/>
    </location>
</feature>
<feature type="binding site" description="in other chain" evidence="1">
    <location>
        <begin position="150"/>
        <end position="151"/>
    </location>
    <ligand>
        <name>pyridoxal 5'-phosphate</name>
        <dbReference type="ChEBI" id="CHEBI:597326"/>
        <note>ligand shared between dimeric partners</note>
    </ligand>
</feature>
<feature type="binding site" description="in other chain" evidence="1">
    <location>
        <position position="274"/>
    </location>
    <ligand>
        <name>pyridoxal 5'-phosphate</name>
        <dbReference type="ChEBI" id="CHEBI:597326"/>
        <note>ligand shared between dimeric partners</note>
    </ligand>
</feature>
<feature type="binding site" evidence="1">
    <location>
        <position position="332"/>
    </location>
    <ligand>
        <name>pyridoxal 5'-phosphate</name>
        <dbReference type="ChEBI" id="CHEBI:597326"/>
        <note>ligand shared between dimeric partners</note>
    </ligand>
</feature>
<feature type="modified residue" description="N6-(pyridoxal phosphate)lysine" evidence="1">
    <location>
        <position position="300"/>
    </location>
</feature>
<accession>B7MB08</accession>
<evidence type="ECO:0000255" key="1">
    <source>
        <dbReference type="HAMAP-Rule" id="MF_01276"/>
    </source>
</evidence>
<evidence type="ECO:0000305" key="2"/>
<comment type="function">
    <text evidence="1">Catalyzes the aminotransferase reaction from putrescine to 2-oxoglutarate, leading to glutamate and 4-aminobutanal, which spontaneously cyclizes to form 1-pyrroline. This is the first step in one of two pathways for putrescine degradation, where putrescine is converted into 4-aminobutanoate (gamma-aminobutyrate or GABA) via 4-aminobutanal. Also functions as a cadaverine transaminase in a a L-lysine degradation pathway to succinate that proceeds via cadaverine, glutarate and L-2-hydroxyglutarate.</text>
</comment>
<comment type="catalytic activity">
    <reaction evidence="1">
        <text>an alkane-alpha,omega-diamine + 2-oxoglutarate = an omega-aminoaldehyde + L-glutamate</text>
        <dbReference type="Rhea" id="RHEA:18217"/>
        <dbReference type="Rhea" id="RHEA-COMP:9766"/>
        <dbReference type="Rhea" id="RHEA-COMP:12750"/>
        <dbReference type="ChEBI" id="CHEBI:16810"/>
        <dbReference type="ChEBI" id="CHEBI:29985"/>
        <dbReference type="ChEBI" id="CHEBI:70977"/>
        <dbReference type="ChEBI" id="CHEBI:133427"/>
        <dbReference type="EC" id="2.6.1.29"/>
    </reaction>
    <physiologicalReaction direction="left-to-right" evidence="1">
        <dbReference type="Rhea" id="RHEA:18218"/>
    </physiologicalReaction>
</comment>
<comment type="catalytic activity">
    <reaction evidence="1">
        <text>putrescine + 2-oxoglutarate = 1-pyrroline + L-glutamate + H2O</text>
        <dbReference type="Rhea" id="RHEA:12268"/>
        <dbReference type="ChEBI" id="CHEBI:15377"/>
        <dbReference type="ChEBI" id="CHEBI:16810"/>
        <dbReference type="ChEBI" id="CHEBI:29985"/>
        <dbReference type="ChEBI" id="CHEBI:36781"/>
        <dbReference type="ChEBI" id="CHEBI:326268"/>
        <dbReference type="EC" id="2.6.1.82"/>
    </reaction>
    <physiologicalReaction direction="left-to-right" evidence="1">
        <dbReference type="Rhea" id="RHEA:12269"/>
    </physiologicalReaction>
</comment>
<comment type="catalytic activity">
    <reaction evidence="1">
        <text>cadaverine + 2-oxoglutarate = 5-aminopentanal + L-glutamate</text>
        <dbReference type="Rhea" id="RHEA:61624"/>
        <dbReference type="ChEBI" id="CHEBI:16810"/>
        <dbReference type="ChEBI" id="CHEBI:29985"/>
        <dbReference type="ChEBI" id="CHEBI:58384"/>
        <dbReference type="ChEBI" id="CHEBI:144896"/>
    </reaction>
    <physiologicalReaction direction="left-to-right" evidence="1">
        <dbReference type="Rhea" id="RHEA:61625"/>
    </physiologicalReaction>
</comment>
<comment type="cofactor">
    <cofactor evidence="1">
        <name>pyridoxal 5'-phosphate</name>
        <dbReference type="ChEBI" id="CHEBI:597326"/>
    </cofactor>
</comment>
<comment type="pathway">
    <text evidence="1">Amine and polyamine degradation; putrescine degradation; 4-aminobutanal from putrescine (transaminase route): step 1/1.</text>
</comment>
<comment type="similarity">
    <text evidence="1">Belongs to the class-III pyridoxal-phosphate-dependent aminotransferase family. Putrescine aminotransferase subfamily.</text>
</comment>
<comment type="sequence caution" evidence="2">
    <conflict type="erroneous initiation">
        <sequence resource="EMBL-CDS" id="CAR04699"/>
    </conflict>
</comment>
<protein>
    <recommendedName>
        <fullName evidence="1">Putrescine aminotransferase</fullName>
        <shortName evidence="1">PAT</shortName>
        <shortName evidence="1">PATase</shortName>
        <ecNumber evidence="1">2.6.1.82</ecNumber>
    </recommendedName>
    <alternativeName>
        <fullName evidence="1">Cadaverine transaminase</fullName>
    </alternativeName>
    <alternativeName>
        <fullName evidence="1">Diamine transaminase</fullName>
        <ecNumber evidence="1">2.6.1.29</ecNumber>
    </alternativeName>
    <alternativeName>
        <fullName evidence="1">Putrescine transaminase</fullName>
    </alternativeName>
    <alternativeName>
        <fullName evidence="1">Putrescine--2-oxoglutaric acid transaminase</fullName>
    </alternativeName>
</protein>
<proteinExistence type="inferred from homology"/>
<dbReference type="EC" id="2.6.1.82" evidence="1"/>
<dbReference type="EC" id="2.6.1.29" evidence="1"/>
<dbReference type="EMBL" id="CU928161">
    <property type="protein sequence ID" value="CAR04699.1"/>
    <property type="status" value="ALT_INIT"/>
    <property type="molecule type" value="Genomic_DNA"/>
</dbReference>
<dbReference type="SMR" id="B7MB08"/>
<dbReference type="KEGG" id="ecz:ECS88_3470"/>
<dbReference type="HOGENOM" id="CLU_016922_10_0_6"/>
<dbReference type="UniPathway" id="UPA00188">
    <property type="reaction ID" value="UER00290"/>
</dbReference>
<dbReference type="Proteomes" id="UP000000747">
    <property type="component" value="Chromosome"/>
</dbReference>
<dbReference type="GO" id="GO:0019161">
    <property type="term" value="F:diamine transaminase activity"/>
    <property type="evidence" value="ECO:0007669"/>
    <property type="project" value="UniProtKB-EC"/>
</dbReference>
<dbReference type="GO" id="GO:0042802">
    <property type="term" value="F:identical protein binding"/>
    <property type="evidence" value="ECO:0007669"/>
    <property type="project" value="TreeGrafter"/>
</dbReference>
<dbReference type="GO" id="GO:0033094">
    <property type="term" value="F:putrescine--2-oxoglutarate transaminase activity"/>
    <property type="evidence" value="ECO:0007669"/>
    <property type="project" value="UniProtKB-UniRule"/>
</dbReference>
<dbReference type="GO" id="GO:0030170">
    <property type="term" value="F:pyridoxal phosphate binding"/>
    <property type="evidence" value="ECO:0007669"/>
    <property type="project" value="UniProtKB-UniRule"/>
</dbReference>
<dbReference type="GO" id="GO:0019477">
    <property type="term" value="P:L-lysine catabolic process"/>
    <property type="evidence" value="ECO:0007669"/>
    <property type="project" value="UniProtKB-UniRule"/>
</dbReference>
<dbReference type="GO" id="GO:0009447">
    <property type="term" value="P:putrescine catabolic process"/>
    <property type="evidence" value="ECO:0007669"/>
    <property type="project" value="UniProtKB-UniRule"/>
</dbReference>
<dbReference type="CDD" id="cd00610">
    <property type="entry name" value="OAT_like"/>
    <property type="match status" value="1"/>
</dbReference>
<dbReference type="FunFam" id="3.40.640.10:FF:000004">
    <property type="entry name" value="Acetylornithine aminotransferase"/>
    <property type="match status" value="1"/>
</dbReference>
<dbReference type="Gene3D" id="3.90.1150.10">
    <property type="entry name" value="Aspartate Aminotransferase, domain 1"/>
    <property type="match status" value="1"/>
</dbReference>
<dbReference type="Gene3D" id="3.40.640.10">
    <property type="entry name" value="Type I PLP-dependent aspartate aminotransferase-like (Major domain)"/>
    <property type="match status" value="1"/>
</dbReference>
<dbReference type="HAMAP" id="MF_01276">
    <property type="entry name" value="Putres_aminotrans_3"/>
    <property type="match status" value="1"/>
</dbReference>
<dbReference type="InterPro" id="IPR005814">
    <property type="entry name" value="Aminotrans_3"/>
</dbReference>
<dbReference type="InterPro" id="IPR049704">
    <property type="entry name" value="Aminotrans_3_PPA_site"/>
</dbReference>
<dbReference type="InterPro" id="IPR050103">
    <property type="entry name" value="Class-III_PLP-dep_AT"/>
</dbReference>
<dbReference type="InterPro" id="IPR017747">
    <property type="entry name" value="Putrescine_aminotransferase"/>
</dbReference>
<dbReference type="InterPro" id="IPR015424">
    <property type="entry name" value="PyrdxlP-dep_Trfase"/>
</dbReference>
<dbReference type="InterPro" id="IPR015421">
    <property type="entry name" value="PyrdxlP-dep_Trfase_major"/>
</dbReference>
<dbReference type="InterPro" id="IPR015422">
    <property type="entry name" value="PyrdxlP-dep_Trfase_small"/>
</dbReference>
<dbReference type="NCBIfam" id="NF008570">
    <property type="entry name" value="PRK11522.1"/>
    <property type="match status" value="1"/>
</dbReference>
<dbReference type="NCBIfam" id="TIGR03372">
    <property type="entry name" value="putres_am_tran"/>
    <property type="match status" value="1"/>
</dbReference>
<dbReference type="PANTHER" id="PTHR11986">
    <property type="entry name" value="AMINOTRANSFERASE CLASS III"/>
    <property type="match status" value="1"/>
</dbReference>
<dbReference type="PANTHER" id="PTHR11986:SF112">
    <property type="entry name" value="PUTRESCINE AMINOTRANSFERASE"/>
    <property type="match status" value="1"/>
</dbReference>
<dbReference type="Pfam" id="PF00202">
    <property type="entry name" value="Aminotran_3"/>
    <property type="match status" value="1"/>
</dbReference>
<dbReference type="PIRSF" id="PIRSF000521">
    <property type="entry name" value="Transaminase_4ab_Lys_Orn"/>
    <property type="match status" value="1"/>
</dbReference>
<dbReference type="SUPFAM" id="SSF53383">
    <property type="entry name" value="PLP-dependent transferases"/>
    <property type="match status" value="1"/>
</dbReference>
<dbReference type="PROSITE" id="PS00600">
    <property type="entry name" value="AA_TRANSFER_CLASS_3"/>
    <property type="match status" value="1"/>
</dbReference>
<reference key="1">
    <citation type="journal article" date="2009" name="PLoS Genet.">
        <title>Organised genome dynamics in the Escherichia coli species results in highly diverse adaptive paths.</title>
        <authorList>
            <person name="Touchon M."/>
            <person name="Hoede C."/>
            <person name="Tenaillon O."/>
            <person name="Barbe V."/>
            <person name="Baeriswyl S."/>
            <person name="Bidet P."/>
            <person name="Bingen E."/>
            <person name="Bonacorsi S."/>
            <person name="Bouchier C."/>
            <person name="Bouvet O."/>
            <person name="Calteau A."/>
            <person name="Chiapello H."/>
            <person name="Clermont O."/>
            <person name="Cruveiller S."/>
            <person name="Danchin A."/>
            <person name="Diard M."/>
            <person name="Dossat C."/>
            <person name="Karoui M.E."/>
            <person name="Frapy E."/>
            <person name="Garry L."/>
            <person name="Ghigo J.M."/>
            <person name="Gilles A.M."/>
            <person name="Johnson J."/>
            <person name="Le Bouguenec C."/>
            <person name="Lescat M."/>
            <person name="Mangenot S."/>
            <person name="Martinez-Jehanne V."/>
            <person name="Matic I."/>
            <person name="Nassif X."/>
            <person name="Oztas S."/>
            <person name="Petit M.A."/>
            <person name="Pichon C."/>
            <person name="Rouy Z."/>
            <person name="Ruf C.S."/>
            <person name="Schneider D."/>
            <person name="Tourret J."/>
            <person name="Vacherie B."/>
            <person name="Vallenet D."/>
            <person name="Medigue C."/>
            <person name="Rocha E.P.C."/>
            <person name="Denamur E."/>
        </authorList>
    </citation>
    <scope>NUCLEOTIDE SEQUENCE [LARGE SCALE GENOMIC DNA]</scope>
    <source>
        <strain>S88 / ExPEC</strain>
    </source>
</reference>
<organism>
    <name type="scientific">Escherichia coli O45:K1 (strain S88 / ExPEC)</name>
    <dbReference type="NCBI Taxonomy" id="585035"/>
    <lineage>
        <taxon>Bacteria</taxon>
        <taxon>Pseudomonadati</taxon>
        <taxon>Pseudomonadota</taxon>
        <taxon>Gammaproteobacteria</taxon>
        <taxon>Enterobacterales</taxon>
        <taxon>Enterobacteriaceae</taxon>
        <taxon>Escherichia</taxon>
    </lineage>
</organism>
<name>PAT_ECO45</name>
<sequence>MNRLPSSASALACSAHALNLIEKRTLDHEEMKALNREVIEYFKEHVNPGFLEYRKSVTAGGDYGAVEWQAGGLNTLVDTQGQEFIDCLGGFGIFNVGHRNPVVVSAVQNQLAKQPLHSQELLDPLRAMLAKTLAALTPGKLKYSFFCNSGTESVEAALKLAKAYQSPRGKFTFIATSGAFHGKSLGALSATAKSTFRKPFMPLLPGFRHVPFGNIEAMRTALNECKKTGDDVAAVILEPIQGEGGVILPPPGYLTAVRKLCDEFGALMILDEVQTGMGRTGKMFACEHENVQPDILCLAKALGGGVMPIGATIATEEVFSVLFDNPFLHTTTFGGNPLACAAALATINVLLEQNLPAQAEQKGDMLLDGFRQLAREYPDLVQEARGKGMLMAIEFVDNEIGYNFASEMFRQRVLVAGTLNNAKTIRIEPPLTLTIEQCELVIKAARKALAAMRVSVEEA</sequence>